<organism>
    <name type="scientific">Arabidopsis thaliana</name>
    <name type="common">Mouse-ear cress</name>
    <dbReference type="NCBI Taxonomy" id="3702"/>
    <lineage>
        <taxon>Eukaryota</taxon>
        <taxon>Viridiplantae</taxon>
        <taxon>Streptophyta</taxon>
        <taxon>Embryophyta</taxon>
        <taxon>Tracheophyta</taxon>
        <taxon>Spermatophyta</taxon>
        <taxon>Magnoliopsida</taxon>
        <taxon>eudicotyledons</taxon>
        <taxon>Gunneridae</taxon>
        <taxon>Pentapetalae</taxon>
        <taxon>rosids</taxon>
        <taxon>malvids</taxon>
        <taxon>Brassicales</taxon>
        <taxon>Brassicaceae</taxon>
        <taxon>Camelineae</taxon>
        <taxon>Arabidopsis</taxon>
    </lineage>
</organism>
<comment type="function">
    <text evidence="2">Subunit of the oligosaccharyl transferase (OST) complex that catalyzes the initial transfer of a defined glycan (Glc(3)Man(9)GlcNAc(2) in eukaryotes) from the lipid carrier dolichol-pyrophosphate to an asparagine residue within an Asn-X-Ser/Thr consensus motif in nascent polypeptide chains, the first step in protein N-glycosylation. N-glycosylation occurs cotranslationally and the complex associates with the Sec61 complex at the channel-forming translocon complex that mediates protein translocation across the endoplasmic reticulum (ER). All subunits are required for a maximal enzyme activity.</text>
</comment>
<comment type="subunit">
    <text evidence="2">Component of the oligosaccharyltransferase (OST) complex.</text>
</comment>
<comment type="subcellular location">
    <subcellularLocation>
        <location evidence="1">Endoplasmic reticulum membrane</location>
        <topology evidence="1">Single-pass type III membrane protein</topology>
    </subcellularLocation>
</comment>
<comment type="similarity">
    <text evidence="4">Belongs to the OST4 family.</text>
</comment>
<evidence type="ECO:0000250" key="1"/>
<evidence type="ECO:0000250" key="2">
    <source>
        <dbReference type="UniProtKB" id="Q99380"/>
    </source>
</evidence>
<evidence type="ECO:0000255" key="3"/>
<evidence type="ECO:0000305" key="4"/>
<feature type="chain" id="PRO_0000420820" description="Dolichyl-diphosphooligosaccharide--protein glycosyltransferase subunit 4C">
    <location>
        <begin position="1"/>
        <end position="35"/>
    </location>
</feature>
<feature type="topological domain" description="Lumenal" evidence="3">
    <location>
        <begin position="1"/>
        <end position="8"/>
    </location>
</feature>
<feature type="transmembrane region" description="Helical" evidence="3">
    <location>
        <begin position="9"/>
        <end position="29"/>
    </location>
</feature>
<feature type="topological domain" description="Cytoplasmic" evidence="3">
    <location>
        <begin position="30"/>
        <end position="35"/>
    </location>
</feature>
<dbReference type="EMBL" id="AC016661">
    <property type="protein sequence ID" value="AAF23278.1"/>
    <property type="molecule type" value="Genomic_DNA"/>
</dbReference>
<dbReference type="EMBL" id="CP002686">
    <property type="protein sequence ID" value="ANM65720.1"/>
    <property type="molecule type" value="Genomic_DNA"/>
</dbReference>
<dbReference type="EMBL" id="CP002686">
    <property type="protein sequence ID" value="ANM65721.1"/>
    <property type="molecule type" value="Genomic_DNA"/>
</dbReference>
<dbReference type="RefSeq" id="NP_001327668.1">
    <property type="nucleotide sequence ID" value="NM_001337822.1"/>
</dbReference>
<dbReference type="RefSeq" id="NP_001327669.1">
    <property type="nucleotide sequence ID" value="NM_001337821.1"/>
</dbReference>
<dbReference type="SMR" id="Q9SF57"/>
<dbReference type="FunCoup" id="Q9SF57">
    <property type="interactions" value="10"/>
</dbReference>
<dbReference type="EnsemblPlants" id="AT3G09455.1">
    <property type="protein sequence ID" value="AT3G09455.1"/>
    <property type="gene ID" value="AT3G09455"/>
</dbReference>
<dbReference type="EnsemblPlants" id="AT3G09455.2">
    <property type="protein sequence ID" value="AT3G09455.2"/>
    <property type="gene ID" value="AT3G09455"/>
</dbReference>
<dbReference type="GeneID" id="28719217"/>
<dbReference type="Gramene" id="AT3G09455.1">
    <property type="protein sequence ID" value="AT3G09455.1"/>
    <property type="gene ID" value="AT3G09455"/>
</dbReference>
<dbReference type="Gramene" id="AT3G09455.2">
    <property type="protein sequence ID" value="AT3G09455.2"/>
    <property type="gene ID" value="AT3G09455"/>
</dbReference>
<dbReference type="KEGG" id="ath:AT3G09455"/>
<dbReference type="Araport" id="AT3G09455"/>
<dbReference type="TAIR" id="AT3G09455"/>
<dbReference type="InParanoid" id="Q9SF57"/>
<dbReference type="OrthoDB" id="2124077at2759"/>
<dbReference type="PRO" id="PR:Q9SF57"/>
<dbReference type="Proteomes" id="UP000006548">
    <property type="component" value="Chromosome 3"/>
</dbReference>
<dbReference type="ExpressionAtlas" id="Q9SF57">
    <property type="expression patterns" value="baseline and differential"/>
</dbReference>
<dbReference type="GO" id="GO:0005789">
    <property type="term" value="C:endoplasmic reticulum membrane"/>
    <property type="evidence" value="ECO:0007669"/>
    <property type="project" value="UniProtKB-SubCell"/>
</dbReference>
<dbReference type="InterPro" id="IPR018943">
    <property type="entry name" value="Oligosaccaryltransferase"/>
</dbReference>
<dbReference type="InterPro" id="IPR044165">
    <property type="entry name" value="OST4_plant"/>
</dbReference>
<dbReference type="InterPro" id="IPR036330">
    <property type="entry name" value="Ost4p_sf"/>
</dbReference>
<dbReference type="PANTHER" id="PTHR28677">
    <property type="entry name" value="DOLICHYL-DIPHOSPHOOLIGOSACCHARIDE--PROTEIN GLYCOSYLTRANSFERASE SUBUNIT 4A-RELATED"/>
    <property type="match status" value="1"/>
</dbReference>
<dbReference type="PANTHER" id="PTHR28677:SF4">
    <property type="entry name" value="DOLICHYL-DIPHOSPHOOLIGOSACCHARIDE--PROTEIN GLYCOSYLTRANSFERASE SUBUNIT 4B-RELATED"/>
    <property type="match status" value="1"/>
</dbReference>
<dbReference type="Pfam" id="PF10215">
    <property type="entry name" value="Ost4"/>
    <property type="match status" value="1"/>
</dbReference>
<dbReference type="SUPFAM" id="SSF103464">
    <property type="entry name" value="Oligosaccharyltransferase subunit ost4p"/>
    <property type="match status" value="1"/>
</dbReference>
<sequence length="35" mass="4133">MFDDQDLGFFANFLGIFIFILVIAYHFVMADPKFE</sequence>
<gene>
    <name type="primary">OST4C</name>
    <name type="ordered locus">At3g09455</name>
    <name type="ORF">F11F8.3</name>
</gene>
<proteinExistence type="inferred from homology"/>
<name>OST4C_ARATH</name>
<keyword id="KW-0256">Endoplasmic reticulum</keyword>
<keyword id="KW-0472">Membrane</keyword>
<keyword id="KW-1185">Reference proteome</keyword>
<keyword id="KW-0735">Signal-anchor</keyword>
<keyword id="KW-0812">Transmembrane</keyword>
<keyword id="KW-1133">Transmembrane helix</keyword>
<reference key="1">
    <citation type="journal article" date="2000" name="Nature">
        <title>Sequence and analysis of chromosome 3 of the plant Arabidopsis thaliana.</title>
        <authorList>
            <person name="Salanoubat M."/>
            <person name="Lemcke K."/>
            <person name="Rieger M."/>
            <person name="Ansorge W."/>
            <person name="Unseld M."/>
            <person name="Fartmann B."/>
            <person name="Valle G."/>
            <person name="Bloecker H."/>
            <person name="Perez-Alonso M."/>
            <person name="Obermaier B."/>
            <person name="Delseny M."/>
            <person name="Boutry M."/>
            <person name="Grivell L.A."/>
            <person name="Mache R."/>
            <person name="Puigdomenech P."/>
            <person name="De Simone V."/>
            <person name="Choisne N."/>
            <person name="Artiguenave F."/>
            <person name="Robert C."/>
            <person name="Brottier P."/>
            <person name="Wincker P."/>
            <person name="Cattolico L."/>
            <person name="Weissenbach J."/>
            <person name="Saurin W."/>
            <person name="Quetier F."/>
            <person name="Schaefer M."/>
            <person name="Mueller-Auer S."/>
            <person name="Gabel C."/>
            <person name="Fuchs M."/>
            <person name="Benes V."/>
            <person name="Wurmbach E."/>
            <person name="Drzonek H."/>
            <person name="Erfle H."/>
            <person name="Jordan N."/>
            <person name="Bangert S."/>
            <person name="Wiedelmann R."/>
            <person name="Kranz H."/>
            <person name="Voss H."/>
            <person name="Holland R."/>
            <person name="Brandt P."/>
            <person name="Nyakatura G."/>
            <person name="Vezzi A."/>
            <person name="D'Angelo M."/>
            <person name="Pallavicini A."/>
            <person name="Toppo S."/>
            <person name="Simionati B."/>
            <person name="Conrad A."/>
            <person name="Hornischer K."/>
            <person name="Kauer G."/>
            <person name="Loehnert T.-H."/>
            <person name="Nordsiek G."/>
            <person name="Reichelt J."/>
            <person name="Scharfe M."/>
            <person name="Schoen O."/>
            <person name="Bargues M."/>
            <person name="Terol J."/>
            <person name="Climent J."/>
            <person name="Navarro P."/>
            <person name="Collado C."/>
            <person name="Perez-Perez A."/>
            <person name="Ottenwaelder B."/>
            <person name="Duchemin D."/>
            <person name="Cooke R."/>
            <person name="Laudie M."/>
            <person name="Berger-Llauro C."/>
            <person name="Purnelle B."/>
            <person name="Masuy D."/>
            <person name="de Haan M."/>
            <person name="Maarse A.C."/>
            <person name="Alcaraz J.-P."/>
            <person name="Cottet A."/>
            <person name="Casacuberta E."/>
            <person name="Monfort A."/>
            <person name="Argiriou A."/>
            <person name="Flores M."/>
            <person name="Liguori R."/>
            <person name="Vitale D."/>
            <person name="Mannhaupt G."/>
            <person name="Haase D."/>
            <person name="Schoof H."/>
            <person name="Rudd S."/>
            <person name="Zaccaria P."/>
            <person name="Mewes H.-W."/>
            <person name="Mayer K.F.X."/>
            <person name="Kaul S."/>
            <person name="Town C.D."/>
            <person name="Koo H.L."/>
            <person name="Tallon L.J."/>
            <person name="Jenkins J."/>
            <person name="Rooney T."/>
            <person name="Rizzo M."/>
            <person name="Walts A."/>
            <person name="Utterback T."/>
            <person name="Fujii C.Y."/>
            <person name="Shea T.P."/>
            <person name="Creasy T.H."/>
            <person name="Haas B."/>
            <person name="Maiti R."/>
            <person name="Wu D."/>
            <person name="Peterson J."/>
            <person name="Van Aken S."/>
            <person name="Pai G."/>
            <person name="Militscher J."/>
            <person name="Sellers P."/>
            <person name="Gill J.E."/>
            <person name="Feldblyum T.V."/>
            <person name="Preuss D."/>
            <person name="Lin X."/>
            <person name="Nierman W.C."/>
            <person name="Salzberg S.L."/>
            <person name="White O."/>
            <person name="Venter J.C."/>
            <person name="Fraser C.M."/>
            <person name="Kaneko T."/>
            <person name="Nakamura Y."/>
            <person name="Sato S."/>
            <person name="Kato T."/>
            <person name="Asamizu E."/>
            <person name="Sasamoto S."/>
            <person name="Kimura T."/>
            <person name="Idesawa K."/>
            <person name="Kawashima K."/>
            <person name="Kishida Y."/>
            <person name="Kiyokawa C."/>
            <person name="Kohara M."/>
            <person name="Matsumoto M."/>
            <person name="Matsuno A."/>
            <person name="Muraki A."/>
            <person name="Nakayama S."/>
            <person name="Nakazaki N."/>
            <person name="Shinpo S."/>
            <person name="Takeuchi C."/>
            <person name="Wada T."/>
            <person name="Watanabe A."/>
            <person name="Yamada M."/>
            <person name="Yasuda M."/>
            <person name="Tabata S."/>
        </authorList>
    </citation>
    <scope>NUCLEOTIDE SEQUENCE [LARGE SCALE GENOMIC DNA]</scope>
    <source>
        <strain>cv. Columbia</strain>
    </source>
</reference>
<reference key="2">
    <citation type="journal article" date="2017" name="Plant J.">
        <title>Araport11: a complete reannotation of the Arabidopsis thaliana reference genome.</title>
        <authorList>
            <person name="Cheng C.Y."/>
            <person name="Krishnakumar V."/>
            <person name="Chan A.P."/>
            <person name="Thibaud-Nissen F."/>
            <person name="Schobel S."/>
            <person name="Town C.D."/>
        </authorList>
    </citation>
    <scope>GENOME REANNOTATION</scope>
    <source>
        <strain>cv. Columbia</strain>
    </source>
</reference>
<accession>Q9SF57</accession>
<accession>A0A1I9LT12</accession>
<protein>
    <recommendedName>
        <fullName>Dolichyl-diphosphooligosaccharide--protein glycosyltransferase subunit 4C</fullName>
    </recommendedName>
</protein>